<gene>
    <name evidence="1" type="primary">fdhE</name>
    <name type="ordered locus">SeD_A4425</name>
</gene>
<proteinExistence type="inferred from homology"/>
<feature type="chain" id="PRO_1000130367" description="Protein FdhE">
    <location>
        <begin position="1"/>
        <end position="309"/>
    </location>
</feature>
<organism>
    <name type="scientific">Salmonella dublin (strain CT_02021853)</name>
    <dbReference type="NCBI Taxonomy" id="439851"/>
    <lineage>
        <taxon>Bacteria</taxon>
        <taxon>Pseudomonadati</taxon>
        <taxon>Pseudomonadota</taxon>
        <taxon>Gammaproteobacteria</taxon>
        <taxon>Enterobacterales</taxon>
        <taxon>Enterobacteriaceae</taxon>
        <taxon>Salmonella</taxon>
    </lineage>
</organism>
<name>FDHE_SALDC</name>
<dbReference type="EMBL" id="CP001144">
    <property type="protein sequence ID" value="ACH77395.1"/>
    <property type="molecule type" value="Genomic_DNA"/>
</dbReference>
<dbReference type="RefSeq" id="WP_000027737.1">
    <property type="nucleotide sequence ID" value="NC_011205.1"/>
</dbReference>
<dbReference type="SMR" id="B5FP25"/>
<dbReference type="KEGG" id="sed:SeD_A4425"/>
<dbReference type="HOGENOM" id="CLU_055275_0_0_6"/>
<dbReference type="Proteomes" id="UP000008322">
    <property type="component" value="Chromosome"/>
</dbReference>
<dbReference type="GO" id="GO:0005829">
    <property type="term" value="C:cytosol"/>
    <property type="evidence" value="ECO:0007669"/>
    <property type="project" value="TreeGrafter"/>
</dbReference>
<dbReference type="GO" id="GO:0008199">
    <property type="term" value="F:ferric iron binding"/>
    <property type="evidence" value="ECO:0007669"/>
    <property type="project" value="TreeGrafter"/>
</dbReference>
<dbReference type="GO" id="GO:0051604">
    <property type="term" value="P:protein maturation"/>
    <property type="evidence" value="ECO:0007669"/>
    <property type="project" value="TreeGrafter"/>
</dbReference>
<dbReference type="CDD" id="cd16341">
    <property type="entry name" value="FdhE"/>
    <property type="match status" value="1"/>
</dbReference>
<dbReference type="FunFam" id="3.90.1670.10:FF:000001">
    <property type="entry name" value="Protein FdhE"/>
    <property type="match status" value="1"/>
</dbReference>
<dbReference type="Gene3D" id="3.90.1670.10">
    <property type="entry name" value="FdhE-like domain"/>
    <property type="match status" value="1"/>
</dbReference>
<dbReference type="HAMAP" id="MF_00611">
    <property type="entry name" value="FdeH"/>
    <property type="match status" value="1"/>
</dbReference>
<dbReference type="InterPro" id="IPR024064">
    <property type="entry name" value="FdhE-like_sf"/>
</dbReference>
<dbReference type="InterPro" id="IPR056796">
    <property type="entry name" value="FdhE_C"/>
</dbReference>
<dbReference type="InterPro" id="IPR056797">
    <property type="entry name" value="FdhE_central"/>
</dbReference>
<dbReference type="InterPro" id="IPR056774">
    <property type="entry name" value="FdhE_N"/>
</dbReference>
<dbReference type="InterPro" id="IPR006452">
    <property type="entry name" value="Formate_DH_accessory"/>
</dbReference>
<dbReference type="NCBIfam" id="TIGR01562">
    <property type="entry name" value="FdhE"/>
    <property type="match status" value="1"/>
</dbReference>
<dbReference type="NCBIfam" id="NF002925">
    <property type="entry name" value="PRK03564.1"/>
    <property type="match status" value="1"/>
</dbReference>
<dbReference type="PANTHER" id="PTHR37689">
    <property type="entry name" value="PROTEIN FDHE"/>
    <property type="match status" value="1"/>
</dbReference>
<dbReference type="PANTHER" id="PTHR37689:SF1">
    <property type="entry name" value="PROTEIN FDHE"/>
    <property type="match status" value="1"/>
</dbReference>
<dbReference type="Pfam" id="PF24860">
    <property type="entry name" value="FdhE_C"/>
    <property type="match status" value="1"/>
</dbReference>
<dbReference type="Pfam" id="PF24859">
    <property type="entry name" value="FdhE_central"/>
    <property type="match status" value="1"/>
</dbReference>
<dbReference type="Pfam" id="PF04216">
    <property type="entry name" value="FdhE_N"/>
    <property type="match status" value="1"/>
</dbReference>
<dbReference type="PIRSF" id="PIRSF018296">
    <property type="entry name" value="Format_dh_formtn"/>
    <property type="match status" value="1"/>
</dbReference>
<dbReference type="SUPFAM" id="SSF144020">
    <property type="entry name" value="FdhE-like"/>
    <property type="match status" value="1"/>
</dbReference>
<keyword id="KW-0963">Cytoplasm</keyword>
<evidence type="ECO:0000255" key="1">
    <source>
        <dbReference type="HAMAP-Rule" id="MF_00611"/>
    </source>
</evidence>
<sequence>MSIRIIPQDELGSSEKRTADMIPPLLFPRLKNVYNRRAERLRELAENNPLGDYLRFAALIAHAQEVVLYDHPLRMDLTARIKDANDQGKPPLDIHVLPRDKHWHTLLHSMIAELKPEMSGPALAVIENLEKASEQELEQMASALFASDFASVSSDKAPLIWAALSLYWAQMASLIPGKARAEYGEARQYCPVCGSMPVSSMVQIGTTQGLRYLHCNLCETEWHVVRVKCSNCEQSRDLHYWSLENEQAAVKAESCGDCGTYLKILYQEKDPKVEAVADDLASLVLDARMEQEGFARSSINPFLFPGEGE</sequence>
<protein>
    <recommendedName>
        <fullName evidence="1">Protein FdhE</fullName>
    </recommendedName>
</protein>
<reference key="1">
    <citation type="journal article" date="2011" name="J. Bacteriol.">
        <title>Comparative genomics of 28 Salmonella enterica isolates: evidence for CRISPR-mediated adaptive sublineage evolution.</title>
        <authorList>
            <person name="Fricke W.F."/>
            <person name="Mammel M.K."/>
            <person name="McDermott P.F."/>
            <person name="Tartera C."/>
            <person name="White D.G."/>
            <person name="Leclerc J.E."/>
            <person name="Ravel J."/>
            <person name="Cebula T.A."/>
        </authorList>
    </citation>
    <scope>NUCLEOTIDE SEQUENCE [LARGE SCALE GENOMIC DNA]</scope>
    <source>
        <strain>CT_02021853</strain>
    </source>
</reference>
<comment type="function">
    <text evidence="1">Necessary for formate dehydrogenase activity.</text>
</comment>
<comment type="subcellular location">
    <subcellularLocation>
        <location evidence="1">Cytoplasm</location>
    </subcellularLocation>
</comment>
<comment type="similarity">
    <text evidence="1">Belongs to the FdhE family.</text>
</comment>
<accession>B5FP25</accession>